<accession>P14313</accession>
<name>FIXA_RHILE</name>
<organism>
    <name type="scientific">Rhizobium leguminosarum</name>
    <dbReference type="NCBI Taxonomy" id="384"/>
    <lineage>
        <taxon>Bacteria</taxon>
        <taxon>Pseudomonadati</taxon>
        <taxon>Pseudomonadota</taxon>
        <taxon>Alphaproteobacteria</taxon>
        <taxon>Hyphomicrobiales</taxon>
        <taxon>Rhizobiaceae</taxon>
        <taxon>Rhizobium/Agrobacterium group</taxon>
        <taxon>Rhizobium</taxon>
    </lineage>
</organism>
<protein>
    <recommendedName>
        <fullName>Protein FixA</fullName>
    </recommendedName>
</protein>
<proteinExistence type="inferred from homology"/>
<feature type="chain" id="PRO_0000167888" description="Protein FixA">
    <location>
        <begin position="1"/>
        <end position="18" status="greater than"/>
    </location>
</feature>
<feature type="non-terminal residue">
    <location>
        <position position="18"/>
    </location>
</feature>
<comment type="function">
    <text>May play a role in a redox process involved in nitrogen fixation.</text>
</comment>
<comment type="subunit">
    <text evidence="1">FixA and FixB form a heterodimer.</text>
</comment>
<comment type="similarity">
    <text evidence="1">Belongs to the ETF beta-subunit/FixA family.</text>
</comment>
<sequence>MHIVVCIKQVPDSAQIRV</sequence>
<dbReference type="EMBL" id="X16521">
    <property type="protein sequence ID" value="CAA34527.1"/>
    <property type="molecule type" value="Genomic_DNA"/>
</dbReference>
<dbReference type="PIR" id="PQ0022">
    <property type="entry name" value="PQ0022"/>
</dbReference>
<dbReference type="GO" id="GO:0009399">
    <property type="term" value="P:nitrogen fixation"/>
    <property type="evidence" value="ECO:0007669"/>
    <property type="project" value="UniProtKB-KW"/>
</dbReference>
<reference key="1">
    <citation type="journal article" date="1989" name="Mol. Gen. Genet.">
        <title>Characterization and nucleotide sequence of a novel gene fixW upstream of the fixABC operon in Rhizobium leguminosarum.</title>
        <authorList>
            <person name="Hontelez J.G.J."/>
            <person name="Lankhorst R.K."/>
            <person name="Katinakis P."/>
            <person name="van den Bos R.C."/>
            <person name="van Kammen A."/>
        </authorList>
    </citation>
    <scope>NUCLEOTIDE SEQUENCE [GENOMIC DNA]</scope>
</reference>
<evidence type="ECO:0000305" key="1"/>
<gene>
    <name type="primary">fixA</name>
</gene>
<keyword id="KW-0249">Electron transport</keyword>
<keyword id="KW-0535">Nitrogen fixation</keyword>
<keyword id="KW-0813">Transport</keyword>